<protein>
    <recommendedName>
        <fullName>Uncharacterized protein STK_23830</fullName>
    </recommendedName>
</protein>
<proteinExistence type="predicted"/>
<keyword id="KW-1185">Reference proteome</keyword>
<reference key="1">
    <citation type="journal article" date="2001" name="DNA Res.">
        <title>Complete genome sequence of an aerobic thermoacidophilic Crenarchaeon, Sulfolobus tokodaii strain7.</title>
        <authorList>
            <person name="Kawarabayasi Y."/>
            <person name="Hino Y."/>
            <person name="Horikawa H."/>
            <person name="Jin-no K."/>
            <person name="Takahashi M."/>
            <person name="Sekine M."/>
            <person name="Baba S."/>
            <person name="Ankai A."/>
            <person name="Kosugi H."/>
            <person name="Hosoyama A."/>
            <person name="Fukui S."/>
            <person name="Nagai Y."/>
            <person name="Nishijima K."/>
            <person name="Otsuka R."/>
            <person name="Nakazawa H."/>
            <person name="Takamiya M."/>
            <person name="Kato Y."/>
            <person name="Yoshizawa T."/>
            <person name="Tanaka T."/>
            <person name="Kudoh Y."/>
            <person name="Yamazaki J."/>
            <person name="Kushida N."/>
            <person name="Oguchi A."/>
            <person name="Aoki K."/>
            <person name="Masuda S."/>
            <person name="Yanagii M."/>
            <person name="Nishimura M."/>
            <person name="Yamagishi A."/>
            <person name="Oshima T."/>
            <person name="Kikuchi H."/>
        </authorList>
    </citation>
    <scope>NUCLEOTIDE SEQUENCE [LARGE SCALE GENOMIC DNA]</scope>
    <source>
        <strain>DSM 16993 / JCM 10545 / NBRC 100140 / 7</strain>
    </source>
</reference>
<gene>
    <name type="ordered locus">STK_23830</name>
</gene>
<sequence length="182" mass="20183">MIVKIIKGDITEIEAEAIVNAANSYLEHGGGVARAIVEKGGYIIQKESREYVRKYGPVPTGGVAVTSAGKLKAKYVIHAVGPRYGIEGEEKLEEAIRNALRKAEELKLSSIALPAISTGIYGYPYEICAEKMVKVIKEEYTNFKHLNTIIVSLYSEEAYNIFVNIFERELAKEKNITLKMSP</sequence>
<dbReference type="EMBL" id="BA000023">
    <property type="protein sequence ID" value="BAB67492.1"/>
    <property type="molecule type" value="Genomic_DNA"/>
</dbReference>
<dbReference type="RefSeq" id="WP_010980467.1">
    <property type="nucleotide sequence ID" value="NC_003106.2"/>
</dbReference>
<dbReference type="SMR" id="Q96XY5"/>
<dbReference type="STRING" id="273063.STK_23830"/>
<dbReference type="GeneID" id="1460465"/>
<dbReference type="KEGG" id="sto:STK_23830"/>
<dbReference type="PATRIC" id="fig|273063.9.peg.2688"/>
<dbReference type="eggNOG" id="arCOG04225">
    <property type="taxonomic scope" value="Archaea"/>
</dbReference>
<dbReference type="OrthoDB" id="15450at2157"/>
<dbReference type="Proteomes" id="UP000001015">
    <property type="component" value="Chromosome"/>
</dbReference>
<dbReference type="CDD" id="cd02907">
    <property type="entry name" value="Macro_Af1521_BAL-like"/>
    <property type="match status" value="1"/>
</dbReference>
<dbReference type="Gene3D" id="3.40.220.10">
    <property type="entry name" value="Leucine Aminopeptidase, subunit E, domain 1"/>
    <property type="match status" value="1"/>
</dbReference>
<dbReference type="InterPro" id="IPR002589">
    <property type="entry name" value="Macro_dom"/>
</dbReference>
<dbReference type="InterPro" id="IPR043472">
    <property type="entry name" value="Macro_dom-like"/>
</dbReference>
<dbReference type="NCBIfam" id="NF001667">
    <property type="entry name" value="PRK00431.2-3"/>
    <property type="match status" value="1"/>
</dbReference>
<dbReference type="PANTHER" id="PTHR11106">
    <property type="entry name" value="GANGLIOSIDE INDUCED DIFFERENTIATION ASSOCIATED PROTEIN 2-RELATED"/>
    <property type="match status" value="1"/>
</dbReference>
<dbReference type="PANTHER" id="PTHR11106:SF111">
    <property type="entry name" value="MACRO DOMAIN-CONTAINING PROTEIN"/>
    <property type="match status" value="1"/>
</dbReference>
<dbReference type="Pfam" id="PF01661">
    <property type="entry name" value="Macro"/>
    <property type="match status" value="1"/>
</dbReference>
<dbReference type="SMART" id="SM00506">
    <property type="entry name" value="A1pp"/>
    <property type="match status" value="1"/>
</dbReference>
<dbReference type="SUPFAM" id="SSF52949">
    <property type="entry name" value="Macro domain-like"/>
    <property type="match status" value="1"/>
</dbReference>
<dbReference type="PROSITE" id="PS51154">
    <property type="entry name" value="MACRO"/>
    <property type="match status" value="1"/>
</dbReference>
<feature type="chain" id="PRO_0000089238" description="Uncharacterized protein STK_23830">
    <location>
        <begin position="1"/>
        <end position="182"/>
    </location>
</feature>
<feature type="domain" description="Macro" evidence="1">
    <location>
        <begin position="1"/>
        <end position="170"/>
    </location>
</feature>
<organism>
    <name type="scientific">Sulfurisphaera tokodaii (strain DSM 16993 / JCM 10545 / NBRC 100140 / 7)</name>
    <name type="common">Sulfolobus tokodaii</name>
    <dbReference type="NCBI Taxonomy" id="273063"/>
    <lineage>
        <taxon>Archaea</taxon>
        <taxon>Thermoproteota</taxon>
        <taxon>Thermoprotei</taxon>
        <taxon>Sulfolobales</taxon>
        <taxon>Sulfolobaceae</taxon>
        <taxon>Sulfurisphaera</taxon>
    </lineage>
</organism>
<name>Y2383_SULTO</name>
<accession>Q96XY5</accession>
<evidence type="ECO:0000255" key="1">
    <source>
        <dbReference type="PROSITE-ProRule" id="PRU00490"/>
    </source>
</evidence>